<reference key="1">
    <citation type="submission" date="2008-10" db="EMBL/GenBank/DDBJ databases">
        <title>Genome sequence of Bacillus cereus AH820.</title>
        <authorList>
            <person name="Dodson R.J."/>
            <person name="Durkin A.S."/>
            <person name="Rosovitz M.J."/>
            <person name="Rasko D.A."/>
            <person name="Hoffmaster A."/>
            <person name="Ravel J."/>
            <person name="Sutton G."/>
        </authorList>
    </citation>
    <scope>NUCLEOTIDE SEQUENCE [LARGE SCALE GENOMIC DNA]</scope>
    <source>
        <strain>AH820</strain>
    </source>
</reference>
<evidence type="ECO:0000255" key="1">
    <source>
        <dbReference type="HAMAP-Rule" id="MF_00137"/>
    </source>
</evidence>
<proteinExistence type="inferred from homology"/>
<comment type="catalytic activity">
    <reaction evidence="1">
        <text>5-amino-1-(5-phospho-D-ribosyl)imidazole-4-carboxylate + L-aspartate + ATP = (2S)-2-[5-amino-1-(5-phospho-beta-D-ribosyl)imidazole-4-carboxamido]succinate + ADP + phosphate + 2 H(+)</text>
        <dbReference type="Rhea" id="RHEA:22628"/>
        <dbReference type="ChEBI" id="CHEBI:15378"/>
        <dbReference type="ChEBI" id="CHEBI:29991"/>
        <dbReference type="ChEBI" id="CHEBI:30616"/>
        <dbReference type="ChEBI" id="CHEBI:43474"/>
        <dbReference type="ChEBI" id="CHEBI:58443"/>
        <dbReference type="ChEBI" id="CHEBI:77657"/>
        <dbReference type="ChEBI" id="CHEBI:456216"/>
        <dbReference type="EC" id="6.3.2.6"/>
    </reaction>
</comment>
<comment type="pathway">
    <text evidence="1">Purine metabolism; IMP biosynthesis via de novo pathway; 5-amino-1-(5-phospho-D-ribosyl)imidazole-4-carboxamide from 5-amino-1-(5-phospho-D-ribosyl)imidazole-4-carboxylate: step 1/2.</text>
</comment>
<comment type="similarity">
    <text evidence="1">Belongs to the SAICAR synthetase family.</text>
</comment>
<name>PUR7_BACC0</name>
<gene>
    <name evidence="1" type="primary">purC</name>
    <name type="ordered locus">BCAH820_0323</name>
</gene>
<sequence>MQKLELLYEGKAKRIYRTESADMVWVEYKDSATAFNGEKKETITGKGRLNNEITTLLFRKLQEVGIKTHFVEKLSETEQLVKKVSIIPLEVVTRNVIAGSLSKRLGMEEGTVLAEPIVEFYFKDDDLGDPLVTEDHIRVLNVASPEQVSVLRDMALQINQVLIDHFASCRVRLVDFKLEFGVTDEGEIILADEISPDTCRLWDETSNEKFDKDVFRRDLGNLTDAYEEILKRLGGISHV</sequence>
<dbReference type="EC" id="6.3.2.6" evidence="1"/>
<dbReference type="EMBL" id="CP001283">
    <property type="protein sequence ID" value="ACK89798.1"/>
    <property type="molecule type" value="Genomic_DNA"/>
</dbReference>
<dbReference type="RefSeq" id="WP_001170542.1">
    <property type="nucleotide sequence ID" value="NC_011773.1"/>
</dbReference>
<dbReference type="SMR" id="B7JM82"/>
<dbReference type="GeneID" id="93010733"/>
<dbReference type="KEGG" id="bcu:BCAH820_0323"/>
<dbReference type="HOGENOM" id="CLU_061495_2_0_9"/>
<dbReference type="UniPathway" id="UPA00074">
    <property type="reaction ID" value="UER00131"/>
</dbReference>
<dbReference type="Proteomes" id="UP000001363">
    <property type="component" value="Chromosome"/>
</dbReference>
<dbReference type="GO" id="GO:0005524">
    <property type="term" value="F:ATP binding"/>
    <property type="evidence" value="ECO:0007669"/>
    <property type="project" value="UniProtKB-KW"/>
</dbReference>
<dbReference type="GO" id="GO:0004639">
    <property type="term" value="F:phosphoribosylaminoimidazolesuccinocarboxamide synthase activity"/>
    <property type="evidence" value="ECO:0007669"/>
    <property type="project" value="UniProtKB-UniRule"/>
</dbReference>
<dbReference type="GO" id="GO:0006189">
    <property type="term" value="P:'de novo' IMP biosynthetic process"/>
    <property type="evidence" value="ECO:0007669"/>
    <property type="project" value="UniProtKB-UniRule"/>
</dbReference>
<dbReference type="GO" id="GO:0009236">
    <property type="term" value="P:cobalamin biosynthetic process"/>
    <property type="evidence" value="ECO:0007669"/>
    <property type="project" value="InterPro"/>
</dbReference>
<dbReference type="CDD" id="cd01415">
    <property type="entry name" value="SAICAR_synt_PurC"/>
    <property type="match status" value="1"/>
</dbReference>
<dbReference type="FunFam" id="3.30.200.20:FF:000189">
    <property type="entry name" value="Phosphoribosylaminoimidazole-succinocarboxamide synthase"/>
    <property type="match status" value="1"/>
</dbReference>
<dbReference type="FunFam" id="3.30.470.20:FF:000006">
    <property type="entry name" value="Phosphoribosylaminoimidazole-succinocarboxamide synthase"/>
    <property type="match status" value="1"/>
</dbReference>
<dbReference type="Gene3D" id="3.30.470.20">
    <property type="entry name" value="ATP-grasp fold, B domain"/>
    <property type="match status" value="1"/>
</dbReference>
<dbReference type="Gene3D" id="3.30.200.20">
    <property type="entry name" value="Phosphorylase Kinase, domain 1"/>
    <property type="match status" value="1"/>
</dbReference>
<dbReference type="HAMAP" id="MF_00137">
    <property type="entry name" value="SAICAR_synth"/>
    <property type="match status" value="1"/>
</dbReference>
<dbReference type="InterPro" id="IPR028923">
    <property type="entry name" value="SAICAR_synt/ADE2_N"/>
</dbReference>
<dbReference type="InterPro" id="IPR033934">
    <property type="entry name" value="SAICAR_synt_PurC"/>
</dbReference>
<dbReference type="InterPro" id="IPR001636">
    <property type="entry name" value="SAICAR_synth"/>
</dbReference>
<dbReference type="InterPro" id="IPR050089">
    <property type="entry name" value="SAICAR_synthetase"/>
</dbReference>
<dbReference type="InterPro" id="IPR018236">
    <property type="entry name" value="SAICAR_synthetase_CS"/>
</dbReference>
<dbReference type="NCBIfam" id="TIGR00081">
    <property type="entry name" value="purC"/>
    <property type="match status" value="1"/>
</dbReference>
<dbReference type="PANTHER" id="PTHR43599">
    <property type="entry name" value="MULTIFUNCTIONAL PROTEIN ADE2"/>
    <property type="match status" value="1"/>
</dbReference>
<dbReference type="PANTHER" id="PTHR43599:SF3">
    <property type="entry name" value="SI:DKEY-6E2.2"/>
    <property type="match status" value="1"/>
</dbReference>
<dbReference type="Pfam" id="PF01259">
    <property type="entry name" value="SAICAR_synt"/>
    <property type="match status" value="1"/>
</dbReference>
<dbReference type="SUPFAM" id="SSF56104">
    <property type="entry name" value="SAICAR synthase-like"/>
    <property type="match status" value="1"/>
</dbReference>
<dbReference type="PROSITE" id="PS01057">
    <property type="entry name" value="SAICAR_SYNTHETASE_1"/>
    <property type="match status" value="1"/>
</dbReference>
<dbReference type="PROSITE" id="PS01058">
    <property type="entry name" value="SAICAR_SYNTHETASE_2"/>
    <property type="match status" value="1"/>
</dbReference>
<feature type="chain" id="PRO_1000117824" description="Phosphoribosylaminoimidazole-succinocarboxamide synthase">
    <location>
        <begin position="1"/>
        <end position="239"/>
    </location>
</feature>
<accession>B7JM82</accession>
<protein>
    <recommendedName>
        <fullName evidence="1">Phosphoribosylaminoimidazole-succinocarboxamide synthase</fullName>
        <ecNumber evidence="1">6.3.2.6</ecNumber>
    </recommendedName>
    <alternativeName>
        <fullName evidence="1">SAICAR synthetase</fullName>
    </alternativeName>
</protein>
<organism>
    <name type="scientific">Bacillus cereus (strain AH820)</name>
    <dbReference type="NCBI Taxonomy" id="405535"/>
    <lineage>
        <taxon>Bacteria</taxon>
        <taxon>Bacillati</taxon>
        <taxon>Bacillota</taxon>
        <taxon>Bacilli</taxon>
        <taxon>Bacillales</taxon>
        <taxon>Bacillaceae</taxon>
        <taxon>Bacillus</taxon>
        <taxon>Bacillus cereus group</taxon>
    </lineage>
</organism>
<keyword id="KW-0067">ATP-binding</keyword>
<keyword id="KW-0436">Ligase</keyword>
<keyword id="KW-0547">Nucleotide-binding</keyword>
<keyword id="KW-0658">Purine biosynthesis</keyword>